<organism>
    <name type="scientific">Rhodopseudomonas palustris (strain ATCC BAA-98 / CGA009)</name>
    <dbReference type="NCBI Taxonomy" id="258594"/>
    <lineage>
        <taxon>Bacteria</taxon>
        <taxon>Pseudomonadati</taxon>
        <taxon>Pseudomonadota</taxon>
        <taxon>Alphaproteobacteria</taxon>
        <taxon>Hyphomicrobiales</taxon>
        <taxon>Nitrobacteraceae</taxon>
        <taxon>Rhodopseudomonas</taxon>
    </lineage>
</organism>
<keyword id="KW-0106">Calcium</keyword>
<keyword id="KW-0997">Cell inner membrane</keyword>
<keyword id="KW-1003">Cell membrane</keyword>
<keyword id="KW-0375">Hydrogen ion transport</keyword>
<keyword id="KW-0406">Ion transport</keyword>
<keyword id="KW-0460">Magnesium</keyword>
<keyword id="KW-0472">Membrane</keyword>
<keyword id="KW-0479">Metal-binding</keyword>
<keyword id="KW-1278">Translocase</keyword>
<keyword id="KW-0812">Transmembrane</keyword>
<keyword id="KW-1133">Transmembrane helix</keyword>
<keyword id="KW-0813">Transport</keyword>
<dbReference type="EC" id="7.1.3.1" evidence="2"/>
<dbReference type="EMBL" id="BX572601">
    <property type="protein sequence ID" value="CAE28173.1"/>
    <property type="molecule type" value="Genomic_DNA"/>
</dbReference>
<dbReference type="RefSeq" id="WP_011158282.1">
    <property type="nucleotide sequence ID" value="NZ_CP116810.1"/>
</dbReference>
<dbReference type="SMR" id="P60363"/>
<dbReference type="STRING" id="258594.RPA2731"/>
<dbReference type="GeneID" id="66893807"/>
<dbReference type="eggNOG" id="COG3808">
    <property type="taxonomic scope" value="Bacteria"/>
</dbReference>
<dbReference type="HOGENOM" id="CLU_008743_3_1_5"/>
<dbReference type="PhylomeDB" id="P60363"/>
<dbReference type="GO" id="GO:0005886">
    <property type="term" value="C:plasma membrane"/>
    <property type="evidence" value="ECO:0007669"/>
    <property type="project" value="UniProtKB-SubCell"/>
</dbReference>
<dbReference type="GO" id="GO:0009678">
    <property type="term" value="F:diphosphate hydrolysis-driven proton transmembrane transporter activity"/>
    <property type="evidence" value="ECO:0007669"/>
    <property type="project" value="UniProtKB-UniRule"/>
</dbReference>
<dbReference type="GO" id="GO:0004427">
    <property type="term" value="F:inorganic diphosphate phosphatase activity"/>
    <property type="evidence" value="ECO:0007669"/>
    <property type="project" value="UniProtKB-UniRule"/>
</dbReference>
<dbReference type="GO" id="GO:0000287">
    <property type="term" value="F:magnesium ion binding"/>
    <property type="evidence" value="ECO:0007669"/>
    <property type="project" value="UniProtKB-UniRule"/>
</dbReference>
<dbReference type="HAMAP" id="MF_01129">
    <property type="entry name" value="PPase_energized_pump"/>
    <property type="match status" value="1"/>
</dbReference>
<dbReference type="InterPro" id="IPR004131">
    <property type="entry name" value="PPase-energised_H-pump"/>
</dbReference>
<dbReference type="NCBIfam" id="NF001951">
    <property type="entry name" value="PRK00733.1-2"/>
    <property type="match status" value="1"/>
</dbReference>
<dbReference type="NCBIfam" id="NF001960">
    <property type="entry name" value="PRK00733.3-5"/>
    <property type="match status" value="1"/>
</dbReference>
<dbReference type="NCBIfam" id="TIGR01104">
    <property type="entry name" value="V_PPase"/>
    <property type="match status" value="1"/>
</dbReference>
<dbReference type="PANTHER" id="PTHR31998">
    <property type="entry name" value="K(+)-INSENSITIVE PYROPHOSPHATE-ENERGIZED PROTON PUMP"/>
    <property type="match status" value="1"/>
</dbReference>
<dbReference type="Pfam" id="PF03030">
    <property type="entry name" value="H_PPase"/>
    <property type="match status" value="1"/>
</dbReference>
<dbReference type="PIRSF" id="PIRSF001265">
    <property type="entry name" value="H+-PPase"/>
    <property type="match status" value="1"/>
</dbReference>
<sequence>MTALWVIVLCGALSIVYAIWATSSVLAADQGNARMQEIAGAVREGAQAYLKRQYMTIAIVGVVIFALLAYFLGILVAIGFAIGAILSGAAGFIGMNVSVRANVRTAQAATTSLAGGLELAFKAGAITGLLVAGLALLGVTLYFIYLIHFAGLQANSRTVVDALVALGFGASLISIFARLGGGIFTKGADVGGDLVGKVEAGIPEDDPRNPATIADNVGDNVGDCAGMAADLFETYAVTAVATMVLAAIFFGSATPDQLQSVMTLPLAIGGICILTSIAGTFFVKLGASQSIMGALYKGLIATGVLSLVGVGVVIHQLIGFGPLPGVSYTGLALFECGIVGLAVTGLIIWITEYYTGTDFRPVKSIAQASVTGHGTNVIQGLAISMESTALPAIVIIAGILITYSLAGLFGIAIATTTMLALAGMIVALDAFGPVTDNAGGIAEMAGLPKEVRKSTDALDAVGNTTKAVTKGYAIGSAGLGALVLFAAYNEDLKFFIAQKSPYFVGVAPDFSLNNPYVVVGLLFGGLLPYLFGAMGMTAVGRAAGAIVEEVRRQFREKPGIMKGTDKPDYGKAVDLLTKAAIKEMIIPSLLPVLSPIFVYFAIYAIAGGGAAGKSAAFSAVGAMLLGVIVTGLFVAISMTSGGGAWDNAKKYIEDGHHGGKGSDAHKAAVTGDTVGDPYKDTAGPAVNPMIKITNIVALLLLAILAH</sequence>
<gene>
    <name evidence="2" type="primary">hppA</name>
    <name type="ordered locus">RPA2731</name>
</gene>
<reference key="1">
    <citation type="journal article" date="2004" name="Nat. Biotechnol.">
        <title>Complete genome sequence of the metabolically versatile photosynthetic bacterium Rhodopseudomonas palustris.</title>
        <authorList>
            <person name="Larimer F.W."/>
            <person name="Chain P."/>
            <person name="Hauser L."/>
            <person name="Lamerdin J.E."/>
            <person name="Malfatti S."/>
            <person name="Do L."/>
            <person name="Land M.L."/>
            <person name="Pelletier D.A."/>
            <person name="Beatty J.T."/>
            <person name="Lang A.S."/>
            <person name="Tabita F.R."/>
            <person name="Gibson J.L."/>
            <person name="Hanson T.E."/>
            <person name="Bobst C."/>
            <person name="Torres y Torres J.L."/>
            <person name="Peres C."/>
            <person name="Harrison F.H."/>
            <person name="Gibson J."/>
            <person name="Harwood C.S."/>
        </authorList>
    </citation>
    <scope>NUCLEOTIDE SEQUENCE [LARGE SCALE GENOMIC DNA]</scope>
    <source>
        <strain>ATCC BAA-98 / CGA009</strain>
    </source>
</reference>
<comment type="function">
    <text evidence="2">Proton pump that utilizes the energy of pyrophosphate hydrolysis as the driving force for proton movement across the membrane. Generates a proton motive force.</text>
</comment>
<comment type="catalytic activity">
    <reaction evidence="2">
        <text>diphosphate + H2O + H(+)(in) = 2 phosphate + 2 H(+)(out)</text>
        <dbReference type="Rhea" id="RHEA:13973"/>
        <dbReference type="ChEBI" id="CHEBI:15377"/>
        <dbReference type="ChEBI" id="CHEBI:15378"/>
        <dbReference type="ChEBI" id="CHEBI:33019"/>
        <dbReference type="ChEBI" id="CHEBI:43474"/>
        <dbReference type="EC" id="7.1.3.1"/>
    </reaction>
</comment>
<comment type="cofactor">
    <cofactor evidence="2">
        <name>Mg(2+)</name>
        <dbReference type="ChEBI" id="CHEBI:18420"/>
    </cofactor>
</comment>
<comment type="subunit">
    <text evidence="2">Homodimer.</text>
</comment>
<comment type="subcellular location">
    <subcellularLocation>
        <location evidence="2">Cell inner membrane</location>
        <topology evidence="2">Multi-pass membrane protein</topology>
    </subcellularLocation>
</comment>
<comment type="similarity">
    <text evidence="2">Belongs to the H(+)-translocating pyrophosphatase (TC 3.A.10) family. K(+)-insensitive subfamily.</text>
</comment>
<feature type="chain" id="PRO_0000217028" description="K(+)-insensitive pyrophosphate-energized proton pump">
    <location>
        <begin position="1"/>
        <end position="706"/>
    </location>
</feature>
<feature type="transmembrane region" description="Helical" evidence="2">
    <location>
        <begin position="1"/>
        <end position="21"/>
    </location>
</feature>
<feature type="transmembrane region" description="Helical" evidence="2">
    <location>
        <begin position="62"/>
        <end position="82"/>
    </location>
</feature>
<feature type="transmembrane region" description="Helical" evidence="2">
    <location>
        <begin position="83"/>
        <end position="103"/>
    </location>
</feature>
<feature type="transmembrane region" description="Helical" evidence="2">
    <location>
        <begin position="129"/>
        <end position="149"/>
    </location>
</feature>
<feature type="transmembrane region" description="Helical" evidence="2">
    <location>
        <begin position="164"/>
        <end position="184"/>
    </location>
</feature>
<feature type="transmembrane region" description="Helical" evidence="2">
    <location>
        <begin position="231"/>
        <end position="251"/>
    </location>
</feature>
<feature type="transmembrane region" description="Helical" evidence="2">
    <location>
        <begin position="263"/>
        <end position="283"/>
    </location>
</feature>
<feature type="transmembrane region" description="Helical" evidence="2">
    <location>
        <begin position="300"/>
        <end position="320"/>
    </location>
</feature>
<feature type="transmembrane region" description="Helical" evidence="2">
    <location>
        <begin position="330"/>
        <end position="350"/>
    </location>
</feature>
<feature type="transmembrane region" description="Helical" evidence="2">
    <location>
        <begin position="393"/>
        <end position="413"/>
    </location>
</feature>
<feature type="transmembrane region" description="Helical" evidence="2">
    <location>
        <begin position="414"/>
        <end position="434"/>
    </location>
</feature>
<feature type="transmembrane region" description="Helical" evidence="2">
    <location>
        <begin position="467"/>
        <end position="487"/>
    </location>
</feature>
<feature type="transmembrane region" description="Helical" evidence="2">
    <location>
        <begin position="516"/>
        <end position="536"/>
    </location>
</feature>
<feature type="transmembrane region" description="Helical" evidence="2">
    <location>
        <begin position="585"/>
        <end position="605"/>
    </location>
</feature>
<feature type="transmembrane region" description="Helical" evidence="2">
    <location>
        <begin position="616"/>
        <end position="636"/>
    </location>
</feature>
<feature type="transmembrane region" description="Helical" evidence="2">
    <location>
        <begin position="685"/>
        <end position="705"/>
    </location>
</feature>
<feature type="binding site" evidence="1">
    <location>
        <position position="186"/>
    </location>
    <ligand>
        <name>substrate</name>
    </ligand>
</feature>
<feature type="binding site" evidence="1">
    <location>
        <position position="189"/>
    </location>
    <ligand>
        <name>Mg(2+)</name>
        <dbReference type="ChEBI" id="CHEBI:18420"/>
        <label>1</label>
    </ligand>
</feature>
<feature type="binding site" evidence="1">
    <location>
        <position position="193"/>
    </location>
    <ligand>
        <name>Mg(2+)</name>
        <dbReference type="ChEBI" id="CHEBI:18420"/>
        <label>1</label>
    </ligand>
</feature>
<feature type="binding site" evidence="1">
    <location>
        <position position="216"/>
    </location>
    <ligand>
        <name>Mg(2+)</name>
        <dbReference type="ChEBI" id="CHEBI:18420"/>
        <label>2</label>
    </ligand>
</feature>
<feature type="binding site" evidence="1">
    <location>
        <position position="219"/>
    </location>
    <ligand>
        <name>Mg(2+)</name>
        <dbReference type="ChEBI" id="CHEBI:18420"/>
        <label>2</label>
    </ligand>
</feature>
<feature type="binding site" evidence="1">
    <location>
        <position position="436"/>
    </location>
    <ligand>
        <name>Mg(2+)</name>
        <dbReference type="ChEBI" id="CHEBI:18420"/>
        <label>2</label>
    </ligand>
</feature>
<feature type="binding site" evidence="1">
    <location>
        <position position="646"/>
    </location>
    <ligand>
        <name>Ca(2+)</name>
        <dbReference type="ChEBI" id="CHEBI:29108"/>
    </ligand>
</feature>
<feature type="binding site" evidence="1">
    <location>
        <position position="672"/>
    </location>
    <ligand>
        <name>Ca(2+)</name>
        <dbReference type="ChEBI" id="CHEBI:29108"/>
    </ligand>
</feature>
<feature type="binding site" evidence="1">
    <location>
        <position position="676"/>
    </location>
    <ligand>
        <name>Ca(2+)</name>
        <dbReference type="ChEBI" id="CHEBI:29108"/>
    </ligand>
</feature>
<feature type="binding site" evidence="1">
    <location>
        <position position="679"/>
    </location>
    <ligand>
        <name>substrate</name>
    </ligand>
</feature>
<feature type="site" description="Important for ion transport" evidence="1">
    <location>
        <position position="178"/>
    </location>
</feature>
<feature type="site" description="Important for ion transport" evidence="1">
    <location>
        <position position="223"/>
    </location>
</feature>
<feature type="site" description="Important for ion transport" evidence="1">
    <location>
        <position position="230"/>
    </location>
</feature>
<feature type="site" description="Determinant of potassium independence" evidence="2">
    <location>
        <position position="466"/>
    </location>
</feature>
<feature type="site" description="Important for ion transport" evidence="1">
    <location>
        <position position="680"/>
    </location>
</feature>
<feature type="site" description="Important for ion transport" evidence="1">
    <location>
        <position position="691"/>
    </location>
</feature>
<name>HPPA_RHOPA</name>
<evidence type="ECO:0000250" key="1"/>
<evidence type="ECO:0000255" key="2">
    <source>
        <dbReference type="HAMAP-Rule" id="MF_01129"/>
    </source>
</evidence>
<proteinExistence type="inferred from homology"/>
<protein>
    <recommendedName>
        <fullName evidence="2">K(+)-insensitive pyrophosphate-energized proton pump</fullName>
        <ecNumber evidence="2">7.1.3.1</ecNumber>
    </recommendedName>
    <alternativeName>
        <fullName evidence="2">Membrane-bound proton-translocating pyrophosphatase</fullName>
    </alternativeName>
    <alternativeName>
        <fullName evidence="2">Pyrophosphate-energized inorganic pyrophosphatase</fullName>
        <shortName evidence="2">H(+)-PPase</shortName>
    </alternativeName>
</protein>
<accession>P60363</accession>